<reference key="1">
    <citation type="submission" date="2006-05" db="EMBL/GenBank/DDBJ databases">
        <title>Complete sequence of chromosome 1 of Burkholderia cenocepacia AU 1054.</title>
        <authorList>
            <consortium name="US DOE Joint Genome Institute"/>
            <person name="Copeland A."/>
            <person name="Lucas S."/>
            <person name="Lapidus A."/>
            <person name="Barry K."/>
            <person name="Detter J.C."/>
            <person name="Glavina del Rio T."/>
            <person name="Hammon N."/>
            <person name="Israni S."/>
            <person name="Dalin E."/>
            <person name="Tice H."/>
            <person name="Pitluck S."/>
            <person name="Chain P."/>
            <person name="Malfatti S."/>
            <person name="Shin M."/>
            <person name="Vergez L."/>
            <person name="Schmutz J."/>
            <person name="Larimer F."/>
            <person name="Land M."/>
            <person name="Hauser L."/>
            <person name="Kyrpides N."/>
            <person name="Lykidis A."/>
            <person name="LiPuma J.J."/>
            <person name="Konstantinidis K."/>
            <person name="Tiedje J.M."/>
            <person name="Richardson P."/>
        </authorList>
    </citation>
    <scope>NUCLEOTIDE SEQUENCE [LARGE SCALE GENOMIC DNA]</scope>
    <source>
        <strain>AU 1054</strain>
    </source>
</reference>
<name>LFTR_BURO1</name>
<feature type="chain" id="PRO_0000258048" description="Leucyl/phenylalanyl-tRNA--protein transferase">
    <location>
        <begin position="1"/>
        <end position="254"/>
    </location>
</feature>
<sequence>MVPWLGPDDPFPSIERALGPATGAPGLLAASADLLPSRLIDAYLRGIFPWYSDGQPVLWWSPDPRMILVPAEFKVSPSLRKTLKRVLRAPEWEVRVDHDFAGVMRACAQAPRRGQRGTWITAEIIDAYTSLYRSGNAHSIETWHDGRRVGGLYGVSFGRMFFGESMYADVTDASKIALAALIAHLREQRLEMIDCQQNTSHLASLGGREIARKAFVAHVRSAVAEPPIPWQFDKRVLAALTSPAETAAPTGTER</sequence>
<gene>
    <name evidence="1" type="primary">aat</name>
    <name type="ordered locus">Bcen_1076</name>
</gene>
<evidence type="ECO:0000255" key="1">
    <source>
        <dbReference type="HAMAP-Rule" id="MF_00688"/>
    </source>
</evidence>
<proteinExistence type="inferred from homology"/>
<keyword id="KW-0012">Acyltransferase</keyword>
<keyword id="KW-0963">Cytoplasm</keyword>
<keyword id="KW-0808">Transferase</keyword>
<comment type="function">
    <text evidence="1">Functions in the N-end rule pathway of protein degradation where it conjugates Leu, Phe and, less efficiently, Met from aminoacyl-tRNAs to the N-termini of proteins containing an N-terminal arginine or lysine.</text>
</comment>
<comment type="catalytic activity">
    <reaction evidence="1">
        <text>N-terminal L-lysyl-[protein] + L-leucyl-tRNA(Leu) = N-terminal L-leucyl-L-lysyl-[protein] + tRNA(Leu) + H(+)</text>
        <dbReference type="Rhea" id="RHEA:12340"/>
        <dbReference type="Rhea" id="RHEA-COMP:9613"/>
        <dbReference type="Rhea" id="RHEA-COMP:9622"/>
        <dbReference type="Rhea" id="RHEA-COMP:12670"/>
        <dbReference type="Rhea" id="RHEA-COMP:12671"/>
        <dbReference type="ChEBI" id="CHEBI:15378"/>
        <dbReference type="ChEBI" id="CHEBI:65249"/>
        <dbReference type="ChEBI" id="CHEBI:78442"/>
        <dbReference type="ChEBI" id="CHEBI:78494"/>
        <dbReference type="ChEBI" id="CHEBI:133043"/>
        <dbReference type="EC" id="2.3.2.6"/>
    </reaction>
</comment>
<comment type="catalytic activity">
    <reaction evidence="1">
        <text>N-terminal L-arginyl-[protein] + L-leucyl-tRNA(Leu) = N-terminal L-leucyl-L-arginyl-[protein] + tRNA(Leu) + H(+)</text>
        <dbReference type="Rhea" id="RHEA:50416"/>
        <dbReference type="Rhea" id="RHEA-COMP:9613"/>
        <dbReference type="Rhea" id="RHEA-COMP:9622"/>
        <dbReference type="Rhea" id="RHEA-COMP:12672"/>
        <dbReference type="Rhea" id="RHEA-COMP:12673"/>
        <dbReference type="ChEBI" id="CHEBI:15378"/>
        <dbReference type="ChEBI" id="CHEBI:64719"/>
        <dbReference type="ChEBI" id="CHEBI:78442"/>
        <dbReference type="ChEBI" id="CHEBI:78494"/>
        <dbReference type="ChEBI" id="CHEBI:133044"/>
        <dbReference type="EC" id="2.3.2.6"/>
    </reaction>
</comment>
<comment type="catalytic activity">
    <reaction evidence="1">
        <text>L-phenylalanyl-tRNA(Phe) + an N-terminal L-alpha-aminoacyl-[protein] = an N-terminal L-phenylalanyl-L-alpha-aminoacyl-[protein] + tRNA(Phe)</text>
        <dbReference type="Rhea" id="RHEA:43632"/>
        <dbReference type="Rhea" id="RHEA-COMP:9668"/>
        <dbReference type="Rhea" id="RHEA-COMP:9699"/>
        <dbReference type="Rhea" id="RHEA-COMP:10636"/>
        <dbReference type="Rhea" id="RHEA-COMP:10637"/>
        <dbReference type="ChEBI" id="CHEBI:78442"/>
        <dbReference type="ChEBI" id="CHEBI:78531"/>
        <dbReference type="ChEBI" id="CHEBI:78597"/>
        <dbReference type="ChEBI" id="CHEBI:83561"/>
        <dbReference type="EC" id="2.3.2.6"/>
    </reaction>
</comment>
<comment type="subcellular location">
    <subcellularLocation>
        <location evidence="1">Cytoplasm</location>
    </subcellularLocation>
</comment>
<comment type="similarity">
    <text evidence="1">Belongs to the L/F-transferase family.</text>
</comment>
<accession>Q1BWM2</accession>
<dbReference type="EC" id="2.3.2.6" evidence="1"/>
<dbReference type="EMBL" id="CP000378">
    <property type="protein sequence ID" value="ABF75983.1"/>
    <property type="molecule type" value="Genomic_DNA"/>
</dbReference>
<dbReference type="SMR" id="Q1BWM2"/>
<dbReference type="HOGENOM" id="CLU_075045_0_0_4"/>
<dbReference type="GO" id="GO:0005737">
    <property type="term" value="C:cytoplasm"/>
    <property type="evidence" value="ECO:0007669"/>
    <property type="project" value="UniProtKB-SubCell"/>
</dbReference>
<dbReference type="GO" id="GO:0008914">
    <property type="term" value="F:leucyl-tRNA--protein transferase activity"/>
    <property type="evidence" value="ECO:0007669"/>
    <property type="project" value="UniProtKB-UniRule"/>
</dbReference>
<dbReference type="GO" id="GO:0030163">
    <property type="term" value="P:protein catabolic process"/>
    <property type="evidence" value="ECO:0007669"/>
    <property type="project" value="UniProtKB-UniRule"/>
</dbReference>
<dbReference type="Gene3D" id="3.40.630.70">
    <property type="entry name" value="Leucyl/phenylalanyl-tRNA-protein transferase, C-terminal domain"/>
    <property type="match status" value="1"/>
</dbReference>
<dbReference type="Gene3D" id="3.30.70.3550">
    <property type="entry name" value="Leucyl/phenylalanyl-tRNA-protein transferase, N-terminal domain"/>
    <property type="match status" value="1"/>
</dbReference>
<dbReference type="HAMAP" id="MF_00688">
    <property type="entry name" value="Leu_Phe_trans"/>
    <property type="match status" value="1"/>
</dbReference>
<dbReference type="InterPro" id="IPR016181">
    <property type="entry name" value="Acyl_CoA_acyltransferase"/>
</dbReference>
<dbReference type="InterPro" id="IPR004616">
    <property type="entry name" value="Leu/Phe-tRNA_Trfase"/>
</dbReference>
<dbReference type="InterPro" id="IPR042203">
    <property type="entry name" value="Leu/Phe-tRNA_Trfase_C"/>
</dbReference>
<dbReference type="InterPro" id="IPR042221">
    <property type="entry name" value="Leu/Phe-tRNA_Trfase_N"/>
</dbReference>
<dbReference type="NCBIfam" id="TIGR00667">
    <property type="entry name" value="aat"/>
    <property type="match status" value="1"/>
</dbReference>
<dbReference type="PANTHER" id="PTHR30098">
    <property type="entry name" value="LEUCYL/PHENYLALANYL-TRNA--PROTEIN TRANSFERASE"/>
    <property type="match status" value="1"/>
</dbReference>
<dbReference type="PANTHER" id="PTHR30098:SF2">
    <property type="entry name" value="LEUCYL_PHENYLALANYL-TRNA--PROTEIN TRANSFERASE"/>
    <property type="match status" value="1"/>
</dbReference>
<dbReference type="Pfam" id="PF03588">
    <property type="entry name" value="Leu_Phe_trans"/>
    <property type="match status" value="1"/>
</dbReference>
<dbReference type="SUPFAM" id="SSF55729">
    <property type="entry name" value="Acyl-CoA N-acyltransferases (Nat)"/>
    <property type="match status" value="1"/>
</dbReference>
<protein>
    <recommendedName>
        <fullName evidence="1">Leucyl/phenylalanyl-tRNA--protein transferase</fullName>
        <ecNumber evidence="1">2.3.2.6</ecNumber>
    </recommendedName>
    <alternativeName>
        <fullName evidence="1">L/F-transferase</fullName>
    </alternativeName>
    <alternativeName>
        <fullName evidence="1">Leucyltransferase</fullName>
    </alternativeName>
    <alternativeName>
        <fullName evidence="1">Phenyalanyltransferase</fullName>
    </alternativeName>
</protein>
<organism>
    <name type="scientific">Burkholderia orbicola (strain AU 1054)</name>
    <dbReference type="NCBI Taxonomy" id="331271"/>
    <lineage>
        <taxon>Bacteria</taxon>
        <taxon>Pseudomonadati</taxon>
        <taxon>Pseudomonadota</taxon>
        <taxon>Betaproteobacteria</taxon>
        <taxon>Burkholderiales</taxon>
        <taxon>Burkholderiaceae</taxon>
        <taxon>Burkholderia</taxon>
        <taxon>Burkholderia cepacia complex</taxon>
        <taxon>Burkholderia orbicola</taxon>
    </lineage>
</organism>